<keyword id="KW-0997">Cell inner membrane</keyword>
<keyword id="KW-1003">Cell membrane</keyword>
<keyword id="KW-0472">Membrane</keyword>
<keyword id="KW-0653">Protein transport</keyword>
<keyword id="KW-0811">Translocation</keyword>
<keyword id="KW-0812">Transmembrane</keyword>
<keyword id="KW-1133">Transmembrane helix</keyword>
<keyword id="KW-0813">Transport</keyword>
<name>SECE_RICMO</name>
<protein>
    <recommendedName>
        <fullName evidence="1">Protein translocase subunit SecE</fullName>
    </recommendedName>
</protein>
<reference key="1">
    <citation type="journal article" date="2002" name="Mol. Biol. Evol.">
        <title>Proliferation and deterioration of Rickettsia palindromic elements.</title>
        <authorList>
            <person name="Amiri H."/>
            <person name="Alsmark C.M."/>
            <person name="Andersson S.G.E."/>
        </authorList>
    </citation>
    <scope>NUCLEOTIDE SEQUENCE [GENOMIC DNA]</scope>
    <source>
        <strain>Ohio 83-441</strain>
    </source>
</reference>
<sequence length="66" mass="7813">MFKEYKIYKFFEQVKQETYKVVWPTRKELVASTLVVVVAVFIFSPICLVLDYSIHNIMQLLLNIGK</sequence>
<evidence type="ECO:0000255" key="1">
    <source>
        <dbReference type="HAMAP-Rule" id="MF_00422"/>
    </source>
</evidence>
<gene>
    <name evidence="1" type="primary">secE</name>
</gene>
<organism>
    <name type="scientific">Rickettsia montanensis</name>
    <dbReference type="NCBI Taxonomy" id="33991"/>
    <lineage>
        <taxon>Bacteria</taxon>
        <taxon>Pseudomonadati</taxon>
        <taxon>Pseudomonadota</taxon>
        <taxon>Alphaproteobacteria</taxon>
        <taxon>Rickettsiales</taxon>
        <taxon>Rickettsiaceae</taxon>
        <taxon>Rickettsieae</taxon>
        <taxon>Rickettsia</taxon>
        <taxon>spotted fever group</taxon>
    </lineage>
</organism>
<accession>Q8KTB5</accession>
<feature type="chain" id="PRO_0000273141" description="Protein translocase subunit SecE">
    <location>
        <begin position="1"/>
        <end position="66"/>
    </location>
</feature>
<feature type="transmembrane region" description="Helical" evidence="1">
    <location>
        <begin position="29"/>
        <end position="49"/>
    </location>
</feature>
<comment type="function">
    <text evidence="1">Essential subunit of the Sec protein translocation channel SecYEG. Clamps together the 2 halves of SecY. May contact the channel plug during translocation.</text>
</comment>
<comment type="subunit">
    <text evidence="1">Component of the Sec protein translocase complex. Heterotrimer consisting of SecY, SecE and SecG subunits. The heterotrimers can form oligomers, although 1 heterotrimer is thought to be able to translocate proteins. Interacts with the ribosome. Interacts with SecDF, and other proteins may be involved. Interacts with SecA.</text>
</comment>
<comment type="subcellular location">
    <subcellularLocation>
        <location evidence="1">Cell inner membrane</location>
        <topology evidence="1">Single-pass membrane protein</topology>
    </subcellularLocation>
</comment>
<comment type="similarity">
    <text evidence="1">Belongs to the SecE/SEC61-gamma family.</text>
</comment>
<dbReference type="EMBL" id="AF502174">
    <property type="protein sequence ID" value="AAM90922.1"/>
    <property type="molecule type" value="Genomic_DNA"/>
</dbReference>
<dbReference type="SMR" id="Q8KTB5"/>
<dbReference type="GO" id="GO:0005886">
    <property type="term" value="C:plasma membrane"/>
    <property type="evidence" value="ECO:0007669"/>
    <property type="project" value="UniProtKB-SubCell"/>
</dbReference>
<dbReference type="GO" id="GO:0008320">
    <property type="term" value="F:protein transmembrane transporter activity"/>
    <property type="evidence" value="ECO:0007669"/>
    <property type="project" value="UniProtKB-UniRule"/>
</dbReference>
<dbReference type="GO" id="GO:0065002">
    <property type="term" value="P:intracellular protein transmembrane transport"/>
    <property type="evidence" value="ECO:0007669"/>
    <property type="project" value="UniProtKB-UniRule"/>
</dbReference>
<dbReference type="GO" id="GO:0009306">
    <property type="term" value="P:protein secretion"/>
    <property type="evidence" value="ECO:0007669"/>
    <property type="project" value="UniProtKB-UniRule"/>
</dbReference>
<dbReference type="GO" id="GO:0006605">
    <property type="term" value="P:protein targeting"/>
    <property type="evidence" value="ECO:0007669"/>
    <property type="project" value="UniProtKB-UniRule"/>
</dbReference>
<dbReference type="GO" id="GO:0043952">
    <property type="term" value="P:protein transport by the Sec complex"/>
    <property type="evidence" value="ECO:0007669"/>
    <property type="project" value="UniProtKB-UniRule"/>
</dbReference>
<dbReference type="Gene3D" id="1.20.5.1030">
    <property type="entry name" value="Preprotein translocase secy subunit"/>
    <property type="match status" value="1"/>
</dbReference>
<dbReference type="HAMAP" id="MF_00422">
    <property type="entry name" value="SecE"/>
    <property type="match status" value="1"/>
</dbReference>
<dbReference type="InterPro" id="IPR005807">
    <property type="entry name" value="SecE_bac"/>
</dbReference>
<dbReference type="InterPro" id="IPR038379">
    <property type="entry name" value="SecE_sf"/>
</dbReference>
<dbReference type="InterPro" id="IPR001901">
    <property type="entry name" value="Translocase_SecE/Sec61-g"/>
</dbReference>
<dbReference type="NCBIfam" id="TIGR00964">
    <property type="entry name" value="secE_bact"/>
    <property type="match status" value="1"/>
</dbReference>
<dbReference type="PANTHER" id="PTHR33910">
    <property type="entry name" value="PROTEIN TRANSLOCASE SUBUNIT SECE"/>
    <property type="match status" value="1"/>
</dbReference>
<dbReference type="PANTHER" id="PTHR33910:SF1">
    <property type="entry name" value="PROTEIN TRANSLOCASE SUBUNIT SECE"/>
    <property type="match status" value="1"/>
</dbReference>
<dbReference type="Pfam" id="PF00584">
    <property type="entry name" value="SecE"/>
    <property type="match status" value="1"/>
</dbReference>
<dbReference type="PROSITE" id="PS01067">
    <property type="entry name" value="SECE_SEC61G"/>
    <property type="match status" value="1"/>
</dbReference>
<proteinExistence type="inferred from homology"/>